<comment type="function">
    <text evidence="6 7 8">Sperm-specific intramembrane-cleaving aspartic protease (I-CLiP) that cleaves distinct tail-anchored proteins and SNARE proteins (PubMed:30733280, PubMed:30733281, PubMed:35960805). In elongated spermatids, modulates intracellular Ca(2+) homeostasis by controlling PLN abundance through proteolytic cleavage (PubMed:30733280). During spermatogenesis, processes SNARE proteins and impacts vesicular trafficking which supports compartmental reorganization in maturating spermatids and may play a role in formation of the acrosome (PubMed:30733281).</text>
</comment>
<comment type="function">
    <text evidence="8">In round spermatids, acts as a scaffold protein supporting FREY1 in IZUMO1 recruitment at the endoplasmic reticulum membrane and coordination of IZUMO1 complex assembly. Stabilizes FREY1 at the endoplasmic reticulum membrane through interaction. May recruit IZUMO1 interaction partners.</text>
</comment>
<comment type="function">
    <molecule>Isoform 2</molecule>
    <text evidence="6">No difference in cleavage specificity compared to isoform 1.</text>
</comment>
<comment type="subunit">
    <text evidence="8">Interacts (via active sites) with FREY; the interaction stabilizes FREY1 protein and inhibits SPPL2C proteolytic activity.</text>
</comment>
<comment type="subcellular location">
    <subcellularLocation>
        <location evidence="6 7 8">Endoplasmic reticulum membrane</location>
        <topology evidence="3">Multi-pass membrane protein</topology>
        <orientation evidence="6">Lumenal side</orientation>
    </subcellularLocation>
</comment>
<comment type="alternative products">
    <event type="alternative splicing"/>
    <isoform>
        <id>A2A6C4-1</id>
        <name>1</name>
        <name evidence="10">A</name>
        <sequence type="displayed"/>
    </isoform>
    <isoform>
        <id>A2A6C4-2</id>
        <name>2</name>
        <name evidence="10">B</name>
        <sequence type="described" ref="VSP_030363 VSP_030364"/>
    </isoform>
</comment>
<comment type="tissue specificity">
    <molecule>Isoform 1</molecule>
    <text evidence="7 8">Highly expressed in testis where it is primarily localised in spermatids (at protein level).</text>
</comment>
<comment type="tissue specificity">
    <molecule>Isoform 2</molecule>
    <text evidence="7 8">Highly expressed in testis where it is primarily localised in spermatids (at protein level).</text>
</comment>
<comment type="domain">
    <text evidence="1">The PAL motif is required for normal active site conformation. The catalytic domains embedded in the membrane are in the opposite orientation to that of the presenilin protein family; therefore, it is predicted to cleave type II-oriented substrate peptides like the prototypic protease SPP.</text>
</comment>
<comment type="PTM">
    <text evidence="1">Glycosylated.</text>
</comment>
<comment type="disruption phenotype">
    <text evidence="6 8">Knockout males produce normal-sized litters when bred with wild-type females (PubMed:30733280, PubMed:35960805). Mutants show a partial loss of elongated spermatids and reduced motility of mature spermatozoa, but preserved fertility. Matings of male and female mutant mice exhibit reduced litter sizes (PubMed:30733280). FREY1 and SPPL2C double knockout mice are normozoospermic infertile (PubMed:35960805).</text>
</comment>
<comment type="similarity">
    <text evidence="11">Belongs to the peptidase A22B family.</text>
</comment>
<comment type="sequence caution" evidence="11">
    <conflict type="erroneous termination">
        <sequence resource="EMBL-CDS" id="BAC36625"/>
    </conflict>
    <text>Truncated C-terminus.</text>
</comment>
<comment type="sequence caution" evidence="11">
    <conflict type="frameshift">
        <sequence resource="EMBL-CDS" id="BAC36625"/>
    </conflict>
</comment>
<sequence length="690" mass="76266">MACLGSLHPLGSLLLLFLLLLLSPEARGEYGLVRVVSKNWSKDYCVLYSSDYVNLPRDLHHAPLLSLHDGTKTPWCPDEDSFHQAQDSSPRQRPLHQTTTMVTRGNCSFYAKGWLAQDQGAQGLLIVSRARNQQCSDTISKPQDPSKPWPALTIPVAVLRYTDMLDIVSHTYGDTDVRVAMFAPLEPVTDYNMAIIFILAVGTVAAGGYWAGLMEANKLQRRQAQRGGGLGGHNQQQTVAAERSQRAWEDDDFEDAPMDFTPAMTGAVVTMSCSIMILLYFFYDCFVYVMIGIFSLGASTGLYSCLAPILCHLPLWRYQWVLPGQRVSVTWPLLLLAGLCAMVTVLWVIHRNEDHWAWLLQDTLGVAYCLFVLRRVRLPTFKNCTLFLLALLAFDVFFVFITPLFTKTGESIMVEVASGPADSSSHERLPMVLKVPRLSFSALTLCNQPFSILGFGDIVVPGFLVAYCHRFDMQVQSRQVYYMACTVAYAVGLLVTFVAMILMQMGQPALLYLVSSTLLTSLAVATCRQEFTLFWTGQGRAKIPAEPVAQPCIASAVGSKMKLEDAKDSRTTNRFEQAVDGESGDLESSTGDDMAEMVTLSEDEATSPEGHSESSEGWSDTNLDPNELPSGSPMALEAMLIPLIQPIPHPSELGHIRTQSRVHDSSLPWMGLHKRKGLKVKKSMSAQAPL</sequence>
<keyword id="KW-0025">Alternative splicing</keyword>
<keyword id="KW-0256">Endoplasmic reticulum</keyword>
<keyword id="KW-0325">Glycoprotein</keyword>
<keyword id="KW-0378">Hydrolase</keyword>
<keyword id="KW-0472">Membrane</keyword>
<keyword id="KW-0645">Protease</keyword>
<keyword id="KW-1185">Reference proteome</keyword>
<keyword id="KW-0732">Signal</keyword>
<keyword id="KW-0812">Transmembrane</keyword>
<keyword id="KW-1133">Transmembrane helix</keyword>
<organism>
    <name type="scientific">Mus musculus</name>
    <name type="common">Mouse</name>
    <dbReference type="NCBI Taxonomy" id="10090"/>
    <lineage>
        <taxon>Eukaryota</taxon>
        <taxon>Metazoa</taxon>
        <taxon>Chordata</taxon>
        <taxon>Craniata</taxon>
        <taxon>Vertebrata</taxon>
        <taxon>Euteleostomi</taxon>
        <taxon>Mammalia</taxon>
        <taxon>Eutheria</taxon>
        <taxon>Euarchontoglires</taxon>
        <taxon>Glires</taxon>
        <taxon>Rodentia</taxon>
        <taxon>Myomorpha</taxon>
        <taxon>Muroidea</taxon>
        <taxon>Muridae</taxon>
        <taxon>Murinae</taxon>
        <taxon>Mus</taxon>
        <taxon>Mus</taxon>
    </lineage>
</organism>
<feature type="signal peptide" evidence="3">
    <location>
        <begin position="1"/>
        <end position="28"/>
    </location>
</feature>
<feature type="chain" id="PRO_0000314798" description="Signal peptide peptidase-like 2C">
    <location>
        <begin position="29"/>
        <end position="690"/>
    </location>
</feature>
<feature type="topological domain" description="Lumenal" evidence="6">
    <location>
        <begin position="29"/>
        <end position="192"/>
    </location>
</feature>
<feature type="transmembrane region" description="Helical" evidence="4">
    <location>
        <begin position="193"/>
        <end position="213"/>
    </location>
</feature>
<feature type="topological domain" description="Cytoplasmic" evidence="4">
    <location>
        <begin position="214"/>
        <end position="260"/>
    </location>
</feature>
<feature type="transmembrane region" description="Helical" evidence="4">
    <location>
        <begin position="261"/>
        <end position="283"/>
    </location>
</feature>
<feature type="topological domain" description="Lumenal" evidence="4">
    <location>
        <position position="284"/>
    </location>
</feature>
<feature type="transmembrane region" description="Helical" evidence="4">
    <location>
        <begin position="285"/>
        <end position="307"/>
    </location>
</feature>
<feature type="topological domain" description="Cytoplasmic" evidence="4">
    <location>
        <begin position="308"/>
        <end position="328"/>
    </location>
</feature>
<feature type="transmembrane region" description="Helical" evidence="4">
    <location>
        <begin position="329"/>
        <end position="349"/>
    </location>
</feature>
<feature type="topological domain" description="Lumenal" evidence="4">
    <location>
        <begin position="350"/>
        <end position="354"/>
    </location>
</feature>
<feature type="transmembrane region" description="Helical" evidence="4">
    <location>
        <begin position="355"/>
        <end position="373"/>
    </location>
</feature>
<feature type="topological domain" description="Cytoplasmic" evidence="4">
    <location>
        <begin position="374"/>
        <end position="384"/>
    </location>
</feature>
<feature type="transmembrane region" description="Helical" evidence="4">
    <location>
        <begin position="385"/>
        <end position="405"/>
    </location>
</feature>
<feature type="topological domain" description="Lumenal" evidence="3">
    <location>
        <begin position="406"/>
        <end position="448"/>
    </location>
</feature>
<feature type="transmembrane region" description="Helical" evidence="4">
    <location>
        <begin position="449"/>
        <end position="469"/>
    </location>
</feature>
<feature type="topological domain" description="Cytoplasmic" evidence="4">
    <location>
        <begin position="470"/>
        <end position="482"/>
    </location>
</feature>
<feature type="transmembrane region" description="Helical" evidence="4">
    <location>
        <begin position="483"/>
        <end position="503"/>
    </location>
</feature>
<feature type="topological domain" description="Lumenal" evidence="4">
    <location>
        <position position="504"/>
    </location>
</feature>
<feature type="transmembrane region" description="Helical" evidence="4">
    <location>
        <begin position="505"/>
        <end position="525"/>
    </location>
</feature>
<feature type="topological domain" description="Cytoplasmic" evidence="3">
    <location>
        <begin position="526"/>
        <end position="690"/>
    </location>
</feature>
<feature type="domain" description="PA">
    <location>
        <begin position="87"/>
        <end position="166"/>
    </location>
</feature>
<feature type="region of interest" description="Disordered" evidence="5">
    <location>
        <begin position="564"/>
        <end position="633"/>
    </location>
</feature>
<feature type="short sequence motif" description="PAL">
    <location>
        <begin position="508"/>
        <end position="510"/>
    </location>
</feature>
<feature type="compositionally biased region" description="Basic and acidic residues" evidence="5">
    <location>
        <begin position="564"/>
        <end position="573"/>
    </location>
</feature>
<feature type="compositionally biased region" description="Polar residues" evidence="5">
    <location>
        <begin position="615"/>
        <end position="624"/>
    </location>
</feature>
<feature type="active site" evidence="2">
    <location>
        <position position="395"/>
    </location>
</feature>
<feature type="active site" evidence="2">
    <location>
        <position position="457"/>
    </location>
</feature>
<feature type="glycosylation site" description="N-linked (GlcNAc...) asparagine" evidence="6">
    <location>
        <position position="106"/>
    </location>
</feature>
<feature type="splice variant" id="VSP_030363" description="In isoform 2." evidence="9">
    <original>FEQAVDG</original>
    <variation>MPEEDFV</variation>
    <location>
        <begin position="575"/>
        <end position="581"/>
    </location>
</feature>
<feature type="splice variant" id="VSP_030364" description="In isoform 2." evidence="9">
    <location>
        <begin position="582"/>
        <end position="690"/>
    </location>
</feature>
<feature type="mutagenesis site" description="Loss of glycosylation." evidence="6">
    <original>N</original>
    <variation>A</variation>
    <location>
        <position position="106"/>
    </location>
</feature>
<feature type="mutagenesis site" description="Loss of aspartyl protease activity. Reduces interaction with FREY1 and FREY1 protein stability." evidence="8">
    <original>D</original>
    <variation>A</variation>
    <location>
        <position position="395"/>
    </location>
</feature>
<feature type="mutagenesis site" description="No effect on interaction with FREY1 and FREY1 protein stability." evidence="8">
    <original>F</original>
    <variation>L</variation>
    <location>
        <position position="455"/>
    </location>
</feature>
<feature type="mutagenesis site" description="Loss of aspartyl protease activity. Reduces interaction with FREY1 and FREY1 protein stability." evidence="8">
    <original>D</original>
    <variation>A</variation>
    <location>
        <position position="457"/>
    </location>
</feature>
<feature type="mutagenesis site" description="Loss ofaspartyl protease activity. No effect on interaction with FREY." evidence="8">
    <original>P</original>
    <variation>L</variation>
    <location>
        <position position="508"/>
    </location>
</feature>
<feature type="sequence conflict" description="In Ref. 1; BAC36625." evidence="11" ref="1">
    <original>S</original>
    <variation>G</variation>
    <location>
        <position position="299"/>
    </location>
</feature>
<reference key="1">
    <citation type="journal article" date="2005" name="Science">
        <title>The transcriptional landscape of the mammalian genome.</title>
        <authorList>
            <person name="Carninci P."/>
            <person name="Kasukawa T."/>
            <person name="Katayama S."/>
            <person name="Gough J."/>
            <person name="Frith M.C."/>
            <person name="Maeda N."/>
            <person name="Oyama R."/>
            <person name="Ravasi T."/>
            <person name="Lenhard B."/>
            <person name="Wells C."/>
            <person name="Kodzius R."/>
            <person name="Shimokawa K."/>
            <person name="Bajic V.B."/>
            <person name="Brenner S.E."/>
            <person name="Batalov S."/>
            <person name="Forrest A.R."/>
            <person name="Zavolan M."/>
            <person name="Davis M.J."/>
            <person name="Wilming L.G."/>
            <person name="Aidinis V."/>
            <person name="Allen J.E."/>
            <person name="Ambesi-Impiombato A."/>
            <person name="Apweiler R."/>
            <person name="Aturaliya R.N."/>
            <person name="Bailey T.L."/>
            <person name="Bansal M."/>
            <person name="Baxter L."/>
            <person name="Beisel K.W."/>
            <person name="Bersano T."/>
            <person name="Bono H."/>
            <person name="Chalk A.M."/>
            <person name="Chiu K.P."/>
            <person name="Choudhary V."/>
            <person name="Christoffels A."/>
            <person name="Clutterbuck D.R."/>
            <person name="Crowe M.L."/>
            <person name="Dalla E."/>
            <person name="Dalrymple B.P."/>
            <person name="de Bono B."/>
            <person name="Della Gatta G."/>
            <person name="di Bernardo D."/>
            <person name="Down T."/>
            <person name="Engstrom P."/>
            <person name="Fagiolini M."/>
            <person name="Faulkner G."/>
            <person name="Fletcher C.F."/>
            <person name="Fukushima T."/>
            <person name="Furuno M."/>
            <person name="Futaki S."/>
            <person name="Gariboldi M."/>
            <person name="Georgii-Hemming P."/>
            <person name="Gingeras T.R."/>
            <person name="Gojobori T."/>
            <person name="Green R.E."/>
            <person name="Gustincich S."/>
            <person name="Harbers M."/>
            <person name="Hayashi Y."/>
            <person name="Hensch T.K."/>
            <person name="Hirokawa N."/>
            <person name="Hill D."/>
            <person name="Huminiecki L."/>
            <person name="Iacono M."/>
            <person name="Ikeo K."/>
            <person name="Iwama A."/>
            <person name="Ishikawa T."/>
            <person name="Jakt M."/>
            <person name="Kanapin A."/>
            <person name="Katoh M."/>
            <person name="Kawasawa Y."/>
            <person name="Kelso J."/>
            <person name="Kitamura H."/>
            <person name="Kitano H."/>
            <person name="Kollias G."/>
            <person name="Krishnan S.P."/>
            <person name="Kruger A."/>
            <person name="Kummerfeld S.K."/>
            <person name="Kurochkin I.V."/>
            <person name="Lareau L.F."/>
            <person name="Lazarevic D."/>
            <person name="Lipovich L."/>
            <person name="Liu J."/>
            <person name="Liuni S."/>
            <person name="McWilliam S."/>
            <person name="Madan Babu M."/>
            <person name="Madera M."/>
            <person name="Marchionni L."/>
            <person name="Matsuda H."/>
            <person name="Matsuzawa S."/>
            <person name="Miki H."/>
            <person name="Mignone F."/>
            <person name="Miyake S."/>
            <person name="Morris K."/>
            <person name="Mottagui-Tabar S."/>
            <person name="Mulder N."/>
            <person name="Nakano N."/>
            <person name="Nakauchi H."/>
            <person name="Ng P."/>
            <person name="Nilsson R."/>
            <person name="Nishiguchi S."/>
            <person name="Nishikawa S."/>
            <person name="Nori F."/>
            <person name="Ohara O."/>
            <person name="Okazaki Y."/>
            <person name="Orlando V."/>
            <person name="Pang K.C."/>
            <person name="Pavan W.J."/>
            <person name="Pavesi G."/>
            <person name="Pesole G."/>
            <person name="Petrovsky N."/>
            <person name="Piazza S."/>
            <person name="Reed J."/>
            <person name="Reid J.F."/>
            <person name="Ring B.Z."/>
            <person name="Ringwald M."/>
            <person name="Rost B."/>
            <person name="Ruan Y."/>
            <person name="Salzberg S.L."/>
            <person name="Sandelin A."/>
            <person name="Schneider C."/>
            <person name="Schoenbach C."/>
            <person name="Sekiguchi K."/>
            <person name="Semple C.A."/>
            <person name="Seno S."/>
            <person name="Sessa L."/>
            <person name="Sheng Y."/>
            <person name="Shibata Y."/>
            <person name="Shimada H."/>
            <person name="Shimada K."/>
            <person name="Silva D."/>
            <person name="Sinclair B."/>
            <person name="Sperling S."/>
            <person name="Stupka E."/>
            <person name="Sugiura K."/>
            <person name="Sultana R."/>
            <person name="Takenaka Y."/>
            <person name="Taki K."/>
            <person name="Tammoja K."/>
            <person name="Tan S.L."/>
            <person name="Tang S."/>
            <person name="Taylor M.S."/>
            <person name="Tegner J."/>
            <person name="Teichmann S.A."/>
            <person name="Ueda H.R."/>
            <person name="van Nimwegen E."/>
            <person name="Verardo R."/>
            <person name="Wei C.L."/>
            <person name="Yagi K."/>
            <person name="Yamanishi H."/>
            <person name="Zabarovsky E."/>
            <person name="Zhu S."/>
            <person name="Zimmer A."/>
            <person name="Hide W."/>
            <person name="Bult C."/>
            <person name="Grimmond S.M."/>
            <person name="Teasdale R.D."/>
            <person name="Liu E.T."/>
            <person name="Brusic V."/>
            <person name="Quackenbush J."/>
            <person name="Wahlestedt C."/>
            <person name="Mattick J.S."/>
            <person name="Hume D.A."/>
            <person name="Kai C."/>
            <person name="Sasaki D."/>
            <person name="Tomaru Y."/>
            <person name="Fukuda S."/>
            <person name="Kanamori-Katayama M."/>
            <person name="Suzuki M."/>
            <person name="Aoki J."/>
            <person name="Arakawa T."/>
            <person name="Iida J."/>
            <person name="Imamura K."/>
            <person name="Itoh M."/>
            <person name="Kato T."/>
            <person name="Kawaji H."/>
            <person name="Kawagashira N."/>
            <person name="Kawashima T."/>
            <person name="Kojima M."/>
            <person name="Kondo S."/>
            <person name="Konno H."/>
            <person name="Nakano K."/>
            <person name="Ninomiya N."/>
            <person name="Nishio T."/>
            <person name="Okada M."/>
            <person name="Plessy C."/>
            <person name="Shibata K."/>
            <person name="Shiraki T."/>
            <person name="Suzuki S."/>
            <person name="Tagami M."/>
            <person name="Waki K."/>
            <person name="Watahiki A."/>
            <person name="Okamura-Oho Y."/>
            <person name="Suzuki H."/>
            <person name="Kawai J."/>
            <person name="Hayashizaki Y."/>
        </authorList>
    </citation>
    <scope>NUCLEOTIDE SEQUENCE [LARGE SCALE MRNA] (ISOFORM 1)</scope>
    <source>
        <strain>C57BL/6J</strain>
        <tissue>Testis</tissue>
    </source>
</reference>
<reference key="2">
    <citation type="journal article" date="2009" name="PLoS Biol.">
        <title>Lineage-specific biology revealed by a finished genome assembly of the mouse.</title>
        <authorList>
            <person name="Church D.M."/>
            <person name="Goodstadt L."/>
            <person name="Hillier L.W."/>
            <person name="Zody M.C."/>
            <person name="Goldstein S."/>
            <person name="She X."/>
            <person name="Bult C.J."/>
            <person name="Agarwala R."/>
            <person name="Cherry J.L."/>
            <person name="DiCuccio M."/>
            <person name="Hlavina W."/>
            <person name="Kapustin Y."/>
            <person name="Meric P."/>
            <person name="Maglott D."/>
            <person name="Birtle Z."/>
            <person name="Marques A.C."/>
            <person name="Graves T."/>
            <person name="Zhou S."/>
            <person name="Teague B."/>
            <person name="Potamousis K."/>
            <person name="Churas C."/>
            <person name="Place M."/>
            <person name="Herschleb J."/>
            <person name="Runnheim R."/>
            <person name="Forrest D."/>
            <person name="Amos-Landgraf J."/>
            <person name="Schwartz D.C."/>
            <person name="Cheng Z."/>
            <person name="Lindblad-Toh K."/>
            <person name="Eichler E.E."/>
            <person name="Ponting C.P."/>
        </authorList>
    </citation>
    <scope>NUCLEOTIDE SEQUENCE [LARGE SCALE GENOMIC DNA]</scope>
    <source>
        <strain>C57BL/6J</strain>
    </source>
</reference>
<reference key="3">
    <citation type="journal article" date="2004" name="Genome Res.">
        <title>The status, quality, and expansion of the NIH full-length cDNA project: the Mammalian Gene Collection (MGC).</title>
        <authorList>
            <consortium name="The MGC Project Team"/>
        </authorList>
    </citation>
    <scope>NUCLEOTIDE SEQUENCE [LARGE SCALE MRNA] (ISOFORM 2)</scope>
    <source>
        <tissue>Testis</tissue>
    </source>
</reference>
<reference key="4">
    <citation type="journal article" date="2019" name="EMBO Rep.">
        <title>The intramembrane protease SPPL2c promotes male germ cell development by cleaving phospholamban.</title>
        <authorList>
            <person name="Niemeyer J."/>
            <person name="Mentrup T."/>
            <person name="Heidasch R."/>
            <person name="Mueller S.A."/>
            <person name="Biswas U."/>
            <person name="Meyer R."/>
            <person name="Papadopoulou A.A."/>
            <person name="Dederer V."/>
            <person name="Haug-Kroeper M."/>
            <person name="Adamski V."/>
            <person name="Luellmann-Rauch R."/>
            <person name="Bergmann M."/>
            <person name="Mayerhofer A."/>
            <person name="Saftig P."/>
            <person name="Wennemuth G."/>
            <person name="Jessberger R."/>
            <person name="Fluhrer R."/>
            <person name="Lichtenthaler S.F."/>
            <person name="Lemberg M.K."/>
            <person name="Schroeder B."/>
        </authorList>
    </citation>
    <scope>FUNCTION</scope>
    <scope>TISSUE SPECIFICITY</scope>
    <scope>SUBCELLULAR LOCATION</scope>
    <scope>ALTERNATIVE SPLICING</scope>
    <scope>GLYCOSYLATION AT ASN-106</scope>
    <scope>MUTAGENESIS OF ASN-106</scope>
    <scope>TOPOLOGY</scope>
</reference>
<reference key="5">
    <citation type="journal article" date="2019" name="EMBO Rep.">
        <title>Signal peptide peptidase-like 2c impairs vesicular transport and cleaves SNARE proteins.</title>
        <authorList>
            <person name="Papadopoulou A.A."/>
            <person name="Mueller S.A."/>
            <person name="Mentrup T."/>
            <person name="Shmueli M.D."/>
            <person name="Niemeyer J."/>
            <person name="Haug-Kroeper M."/>
            <person name="von Blume J."/>
            <person name="Mayerhofer A."/>
            <person name="Feederle R."/>
            <person name="Schroeder B."/>
            <person name="Lichtenthaler S.F."/>
            <person name="Fluhrer R."/>
        </authorList>
    </citation>
    <scope>FUNCTION</scope>
    <scope>SUBCELLULAR LOCATION</scope>
    <scope>TISSUE SPECIFICITY</scope>
</reference>
<reference key="6">
    <citation type="journal article" date="2022" name="Sci. Adv.">
        <title>C11orf94/Frey is a key regulator for male fertility by controlling Izumo1 complex assembly.</title>
        <authorList>
            <person name="Contreras W."/>
            <person name="Wiesehoefer C."/>
            <person name="Schreier D."/>
            <person name="Leinung N."/>
            <person name="Peche P."/>
            <person name="Wennemuth G."/>
            <person name="Gentzel M."/>
            <person name="Schroeder B."/>
            <person name="Mentrup T."/>
        </authorList>
    </citation>
    <scope>FUNCTION</scope>
    <scope>SUBCELLULAR LOCATION</scope>
    <scope>TISSUE SPECIFICITY</scope>
    <scope>MUTAGENESIS OF ASP-395; PHE-455; ASP-457 AND PRO-508</scope>
    <scope>DISRUPTION PHENOTYPE</scope>
    <scope>INTERACTION WITH FREY</scope>
</reference>
<accession>A2A6C4</accession>
<accession>Q497R4</accession>
<accession>Q8BHP0</accession>
<gene>
    <name evidence="12" type="primary">Sppl2c</name>
    <name evidence="3" type="synonym">Imp5</name>
</gene>
<dbReference type="EC" id="3.4.23.-" evidence="6 7 8"/>
<dbReference type="EMBL" id="AK077122">
    <property type="protein sequence ID" value="BAC36625.1"/>
    <property type="status" value="ALT_SEQ"/>
    <property type="molecule type" value="mRNA"/>
</dbReference>
<dbReference type="EMBL" id="AL596383">
    <property type="status" value="NOT_ANNOTATED_CDS"/>
    <property type="molecule type" value="Genomic_DNA"/>
</dbReference>
<dbReference type="EMBL" id="BC100418">
    <property type="protein sequence ID" value="AAI00419.1"/>
    <property type="molecule type" value="mRNA"/>
</dbReference>
<dbReference type="CCDS" id="CCDS36351.1">
    <molecule id="A2A6C4-2"/>
</dbReference>
<dbReference type="CCDS" id="CCDS36352.1">
    <molecule id="A2A6C4-1"/>
</dbReference>
<dbReference type="RefSeq" id="NP_001076004.1">
    <molecule id="A2A6C4-2"/>
    <property type="nucleotide sequence ID" value="NM_001082535.1"/>
</dbReference>
<dbReference type="RefSeq" id="NP_950184.2">
    <molecule id="A2A6C4-1"/>
    <property type="nucleotide sequence ID" value="NM_199019.2"/>
</dbReference>
<dbReference type="FunCoup" id="A2A6C4">
    <property type="interactions" value="12"/>
</dbReference>
<dbReference type="STRING" id="10090.ENSMUSP00000102613"/>
<dbReference type="GlyCosmos" id="A2A6C4">
    <property type="glycosylation" value="1 site, No reported glycans"/>
</dbReference>
<dbReference type="GlyGen" id="A2A6C4">
    <property type="glycosylation" value="1 site"/>
</dbReference>
<dbReference type="iPTMnet" id="A2A6C4"/>
<dbReference type="PhosphoSitePlus" id="A2A6C4"/>
<dbReference type="SwissPalm" id="A2A6C4"/>
<dbReference type="PaxDb" id="10090-ENSMUSP00000102613"/>
<dbReference type="ProteomicsDB" id="258728">
    <molecule id="A2A6C4-1"/>
</dbReference>
<dbReference type="ProteomicsDB" id="258729">
    <molecule id="A2A6C4-2"/>
</dbReference>
<dbReference type="Antibodypedia" id="17655">
    <property type="antibodies" value="42 antibodies from 16 providers"/>
</dbReference>
<dbReference type="DNASU" id="237958"/>
<dbReference type="Ensembl" id="ENSMUST00000059448.8">
    <molecule id="A2A6C4-2"/>
    <property type="protein sequence ID" value="ENSMUSP00000091453.6"/>
    <property type="gene ID" value="ENSMUSG00000049506.8"/>
</dbReference>
<dbReference type="Ensembl" id="ENSMUST00000107000.2">
    <molecule id="A2A6C4-1"/>
    <property type="protein sequence ID" value="ENSMUSP00000102613.2"/>
    <property type="gene ID" value="ENSMUSG00000049506.8"/>
</dbReference>
<dbReference type="GeneID" id="237958"/>
<dbReference type="KEGG" id="mmu:237958"/>
<dbReference type="UCSC" id="uc007lwd.1">
    <molecule id="A2A6C4-2"/>
    <property type="organism name" value="mouse"/>
</dbReference>
<dbReference type="UCSC" id="uc011yfz.1">
    <molecule id="A2A6C4-1"/>
    <property type="organism name" value="mouse"/>
</dbReference>
<dbReference type="AGR" id="MGI:3045264"/>
<dbReference type="CTD" id="162540"/>
<dbReference type="MGI" id="MGI:3045264">
    <property type="gene designation" value="Sppl2c"/>
</dbReference>
<dbReference type="VEuPathDB" id="HostDB:ENSMUSG00000049506"/>
<dbReference type="eggNOG" id="KOG2442">
    <property type="taxonomic scope" value="Eukaryota"/>
</dbReference>
<dbReference type="GeneTree" id="ENSGT00940000163306"/>
<dbReference type="HOGENOM" id="CLU_023799_2_1_1"/>
<dbReference type="InParanoid" id="A2A6C4"/>
<dbReference type="OMA" id="KDYCVLF"/>
<dbReference type="OrthoDB" id="29661at2759"/>
<dbReference type="PhylomeDB" id="A2A6C4"/>
<dbReference type="TreeFam" id="TF319186"/>
<dbReference type="BRENDA" id="3.4.23.B24">
    <property type="organism ID" value="3474"/>
</dbReference>
<dbReference type="BioGRID-ORCS" id="237958">
    <property type="hits" value="4 hits in 76 CRISPR screens"/>
</dbReference>
<dbReference type="PRO" id="PR:A2A6C4"/>
<dbReference type="Proteomes" id="UP000000589">
    <property type="component" value="Chromosome 11"/>
</dbReference>
<dbReference type="RNAct" id="A2A6C4">
    <property type="molecule type" value="protein"/>
</dbReference>
<dbReference type="Bgee" id="ENSMUSG00000049506">
    <property type="expression patterns" value="Expressed in testis and 3 other cell types or tissues"/>
</dbReference>
<dbReference type="GO" id="GO:0098554">
    <property type="term" value="C:cytoplasmic side of endoplasmic reticulum membrane"/>
    <property type="evidence" value="ECO:0000250"/>
    <property type="project" value="UniProtKB"/>
</dbReference>
<dbReference type="GO" id="GO:0005789">
    <property type="term" value="C:endoplasmic reticulum membrane"/>
    <property type="evidence" value="ECO:0000314"/>
    <property type="project" value="UniProtKB"/>
</dbReference>
<dbReference type="GO" id="GO:0098553">
    <property type="term" value="C:lumenal side of endoplasmic reticulum membrane"/>
    <property type="evidence" value="ECO:0000250"/>
    <property type="project" value="UniProtKB"/>
</dbReference>
<dbReference type="GO" id="GO:0042500">
    <property type="term" value="F:aspartic endopeptidase activity, intramembrane cleaving"/>
    <property type="evidence" value="ECO:0000314"/>
    <property type="project" value="UniProtKB"/>
</dbReference>
<dbReference type="GO" id="GO:0004190">
    <property type="term" value="F:aspartic-type endopeptidase activity"/>
    <property type="evidence" value="ECO:0000314"/>
    <property type="project" value="UniProt"/>
</dbReference>
<dbReference type="GO" id="GO:0060090">
    <property type="term" value="F:molecular adaptor activity"/>
    <property type="evidence" value="ECO:0000314"/>
    <property type="project" value="UniProtKB"/>
</dbReference>
<dbReference type="GO" id="GO:0042803">
    <property type="term" value="F:protein homodimerization activity"/>
    <property type="evidence" value="ECO:0000250"/>
    <property type="project" value="UniProtKB"/>
</dbReference>
<dbReference type="GO" id="GO:0001675">
    <property type="term" value="P:acrosome assembly"/>
    <property type="evidence" value="ECO:0000314"/>
    <property type="project" value="UniProtKB"/>
</dbReference>
<dbReference type="GO" id="GO:0007342">
    <property type="term" value="P:fusion of sperm to egg plasma membrane involved in single fertilization"/>
    <property type="evidence" value="ECO:0000315"/>
    <property type="project" value="UniProt"/>
</dbReference>
<dbReference type="GO" id="GO:0006874">
    <property type="term" value="P:intracellular calcium ion homeostasis"/>
    <property type="evidence" value="ECO:0000314"/>
    <property type="project" value="UniProtKB"/>
</dbReference>
<dbReference type="GO" id="GO:0031293">
    <property type="term" value="P:membrane protein intracellular domain proteolysis"/>
    <property type="evidence" value="ECO:0000314"/>
    <property type="project" value="UniProtKB"/>
</dbReference>
<dbReference type="GO" id="GO:0050821">
    <property type="term" value="P:protein stabilization"/>
    <property type="evidence" value="ECO:0000314"/>
    <property type="project" value="UniProt"/>
</dbReference>
<dbReference type="GO" id="GO:0007283">
    <property type="term" value="P:spermatogenesis"/>
    <property type="evidence" value="ECO:0000314"/>
    <property type="project" value="UniProt"/>
</dbReference>
<dbReference type="FunFam" id="3.50.30.30:FF:000035">
    <property type="entry name" value="Signal peptide peptidase like 2C"/>
    <property type="match status" value="1"/>
</dbReference>
<dbReference type="Gene3D" id="3.50.30.30">
    <property type="match status" value="1"/>
</dbReference>
<dbReference type="InterPro" id="IPR003137">
    <property type="entry name" value="PA_domain"/>
</dbReference>
<dbReference type="InterPro" id="IPR007369">
    <property type="entry name" value="Peptidase_A22B_SPP"/>
</dbReference>
<dbReference type="InterPro" id="IPR006639">
    <property type="entry name" value="Preselin/SPP"/>
</dbReference>
<dbReference type="PANTHER" id="PTHR12174">
    <property type="entry name" value="SIGNAL PEPTIDE PEPTIDASE"/>
    <property type="match status" value="1"/>
</dbReference>
<dbReference type="PANTHER" id="PTHR12174:SF38">
    <property type="entry name" value="SIGNAL PEPTIDE PEPTIDASE-LIKE 2C"/>
    <property type="match status" value="1"/>
</dbReference>
<dbReference type="Pfam" id="PF02225">
    <property type="entry name" value="PA"/>
    <property type="match status" value="1"/>
</dbReference>
<dbReference type="Pfam" id="PF04258">
    <property type="entry name" value="Peptidase_A22B"/>
    <property type="match status" value="1"/>
</dbReference>
<dbReference type="SMART" id="SM00730">
    <property type="entry name" value="PSN"/>
    <property type="match status" value="1"/>
</dbReference>
<evidence type="ECO:0000250" key="1">
    <source>
        <dbReference type="UniProtKB" id="P49768"/>
    </source>
</evidence>
<evidence type="ECO:0000250" key="2">
    <source>
        <dbReference type="UniProtKB" id="P49810"/>
    </source>
</evidence>
<evidence type="ECO:0000250" key="3">
    <source>
        <dbReference type="UniProtKB" id="Q8IUH8"/>
    </source>
</evidence>
<evidence type="ECO:0000255" key="4"/>
<evidence type="ECO:0000256" key="5">
    <source>
        <dbReference type="SAM" id="MobiDB-lite"/>
    </source>
</evidence>
<evidence type="ECO:0000269" key="6">
    <source>
    </source>
</evidence>
<evidence type="ECO:0000269" key="7">
    <source>
    </source>
</evidence>
<evidence type="ECO:0000269" key="8">
    <source>
    </source>
</evidence>
<evidence type="ECO:0000303" key="9">
    <source>
    </source>
</evidence>
<evidence type="ECO:0000303" key="10">
    <source>
    </source>
</evidence>
<evidence type="ECO:0000305" key="11"/>
<evidence type="ECO:0000312" key="12">
    <source>
        <dbReference type="MGI" id="MGI:3045264"/>
    </source>
</evidence>
<name>SPP2C_MOUSE</name>
<protein>
    <recommendedName>
        <fullName evidence="11">Signal peptide peptidase-like 2C</fullName>
        <shortName evidence="3">SPP-like 2C</shortName>
        <shortName evidence="3">SPPL2c</shortName>
        <ecNumber evidence="6 7 8">3.4.23.-</ecNumber>
    </recommendedName>
    <alternativeName>
        <fullName evidence="3">Intramembrane protease 5</fullName>
        <shortName evidence="3">IMP-5</shortName>
    </alternativeName>
</protein>
<proteinExistence type="evidence at protein level"/>